<gene>
    <name type="primary">PMM1</name>
    <name type="synonym">PMMH22</name>
</gene>
<dbReference type="EC" id="5.4.2.8" evidence="3"/>
<dbReference type="EMBL" id="U62526">
    <property type="protein sequence ID" value="AAC51117.1"/>
    <property type="molecule type" value="mRNA"/>
</dbReference>
<dbReference type="EMBL" id="D87810">
    <property type="protein sequence ID" value="BAA13460.1"/>
    <property type="molecule type" value="mRNA"/>
</dbReference>
<dbReference type="EMBL" id="U86070">
    <property type="protein sequence ID" value="AAC00023.1"/>
    <property type="molecule type" value="mRNA"/>
</dbReference>
<dbReference type="EMBL" id="CR456544">
    <property type="protein sequence ID" value="CAG30430.1"/>
    <property type="molecule type" value="mRNA"/>
</dbReference>
<dbReference type="EMBL" id="AK289368">
    <property type="protein sequence ID" value="BAF82057.1"/>
    <property type="molecule type" value="mRNA"/>
</dbReference>
<dbReference type="EMBL" id="AK316580">
    <property type="protein sequence ID" value="BAG38168.1"/>
    <property type="molecule type" value="mRNA"/>
</dbReference>
<dbReference type="EMBL" id="AL023553">
    <property type="status" value="NOT_ANNOTATED_CDS"/>
    <property type="molecule type" value="Genomic_DNA"/>
</dbReference>
<dbReference type="EMBL" id="CH471095">
    <property type="protein sequence ID" value="EAW60443.1"/>
    <property type="molecule type" value="Genomic_DNA"/>
</dbReference>
<dbReference type="EMBL" id="BC010855">
    <property type="protein sequence ID" value="AAH10855.1"/>
    <property type="molecule type" value="mRNA"/>
</dbReference>
<dbReference type="EMBL" id="BC016818">
    <property type="protein sequence ID" value="AAH16818.1"/>
    <property type="molecule type" value="mRNA"/>
</dbReference>
<dbReference type="CCDS" id="CCDS14020.1"/>
<dbReference type="RefSeq" id="NP_002667.2">
    <property type="nucleotide sequence ID" value="NM_002676.3"/>
</dbReference>
<dbReference type="PDB" id="2FUC">
    <property type="method" value="X-ray"/>
    <property type="resolution" value="2.10 A"/>
    <property type="chains" value="A=1-262"/>
</dbReference>
<dbReference type="PDB" id="2FUE">
    <property type="method" value="X-ray"/>
    <property type="resolution" value="1.75 A"/>
    <property type="chains" value="A=1-262"/>
</dbReference>
<dbReference type="PDB" id="6CFR">
    <property type="method" value="X-ray"/>
    <property type="resolution" value="2.07 A"/>
    <property type="chains" value="A=1-262"/>
</dbReference>
<dbReference type="PDB" id="6CFS">
    <property type="method" value="X-ray"/>
    <property type="resolution" value="2.07 A"/>
    <property type="chains" value="A=1-262"/>
</dbReference>
<dbReference type="PDB" id="6CFT">
    <property type="method" value="X-ray"/>
    <property type="resolution" value="2.43 A"/>
    <property type="chains" value="A=1-262"/>
</dbReference>
<dbReference type="PDB" id="6CFU">
    <property type="method" value="X-ray"/>
    <property type="resolution" value="2.24 A"/>
    <property type="chains" value="A=1-262"/>
</dbReference>
<dbReference type="PDB" id="6CFV">
    <property type="method" value="X-ray"/>
    <property type="resolution" value="1.92 A"/>
    <property type="chains" value="A=1-262"/>
</dbReference>
<dbReference type="PDBsum" id="2FUC"/>
<dbReference type="PDBsum" id="2FUE"/>
<dbReference type="PDBsum" id="6CFR"/>
<dbReference type="PDBsum" id="6CFS"/>
<dbReference type="PDBsum" id="6CFT"/>
<dbReference type="PDBsum" id="6CFU"/>
<dbReference type="PDBsum" id="6CFV"/>
<dbReference type="SMR" id="Q92871"/>
<dbReference type="BioGRID" id="111385">
    <property type="interactions" value="20"/>
</dbReference>
<dbReference type="ComplexPortal" id="CPX-2131">
    <property type="entry name" value="alpha-D-mannose 1,6-phosphomutase"/>
</dbReference>
<dbReference type="FunCoup" id="Q92871">
    <property type="interactions" value="925"/>
</dbReference>
<dbReference type="IntAct" id="Q92871">
    <property type="interactions" value="18"/>
</dbReference>
<dbReference type="MINT" id="Q92871"/>
<dbReference type="STRING" id="9606.ENSP00000216259"/>
<dbReference type="iPTMnet" id="Q92871"/>
<dbReference type="PhosphoSitePlus" id="Q92871"/>
<dbReference type="BioMuta" id="PMM1"/>
<dbReference type="DMDM" id="2499519"/>
<dbReference type="jPOST" id="Q92871"/>
<dbReference type="MassIVE" id="Q92871"/>
<dbReference type="PaxDb" id="9606-ENSP00000216259"/>
<dbReference type="PeptideAtlas" id="Q92871"/>
<dbReference type="ProteomicsDB" id="75557"/>
<dbReference type="Pumba" id="Q92871"/>
<dbReference type="Antibodypedia" id="26980">
    <property type="antibodies" value="92 antibodies from 20 providers"/>
</dbReference>
<dbReference type="DNASU" id="5372"/>
<dbReference type="Ensembl" id="ENST00000216259.8">
    <property type="protein sequence ID" value="ENSP00000216259.7"/>
    <property type="gene ID" value="ENSG00000100417.12"/>
</dbReference>
<dbReference type="GeneID" id="5372"/>
<dbReference type="KEGG" id="hsa:5372"/>
<dbReference type="MANE-Select" id="ENST00000216259.8">
    <property type="protein sequence ID" value="ENSP00000216259.7"/>
    <property type="RefSeq nucleotide sequence ID" value="NM_002676.3"/>
    <property type="RefSeq protein sequence ID" value="NP_002667.2"/>
</dbReference>
<dbReference type="UCSC" id="uc003bal.3">
    <property type="organism name" value="human"/>
</dbReference>
<dbReference type="AGR" id="HGNC:9114"/>
<dbReference type="CTD" id="5372"/>
<dbReference type="DisGeNET" id="5372"/>
<dbReference type="GeneCards" id="PMM1"/>
<dbReference type="HGNC" id="HGNC:9114">
    <property type="gene designation" value="PMM1"/>
</dbReference>
<dbReference type="HPA" id="ENSG00000100417">
    <property type="expression patterns" value="Low tissue specificity"/>
</dbReference>
<dbReference type="MalaCards" id="PMM1"/>
<dbReference type="MIM" id="601786">
    <property type="type" value="gene"/>
</dbReference>
<dbReference type="neXtProt" id="NX_Q92871"/>
<dbReference type="OpenTargets" id="ENSG00000100417"/>
<dbReference type="PharmGKB" id="PA33440"/>
<dbReference type="VEuPathDB" id="HostDB:ENSG00000100417"/>
<dbReference type="eggNOG" id="KOG3189">
    <property type="taxonomic scope" value="Eukaryota"/>
</dbReference>
<dbReference type="GeneTree" id="ENSGT00390000002918"/>
<dbReference type="HOGENOM" id="CLU_065642_0_1_1"/>
<dbReference type="InParanoid" id="Q92871"/>
<dbReference type="OMA" id="FCLHYMA"/>
<dbReference type="OrthoDB" id="10264771at2759"/>
<dbReference type="PAN-GO" id="Q92871">
    <property type="GO annotations" value="4 GO annotations based on evolutionary models"/>
</dbReference>
<dbReference type="PhylomeDB" id="Q92871"/>
<dbReference type="TreeFam" id="TF300874"/>
<dbReference type="BRENDA" id="5.4.2.8">
    <property type="organism ID" value="2681"/>
</dbReference>
<dbReference type="PathwayCommons" id="Q92871"/>
<dbReference type="Reactome" id="R-HSA-446205">
    <property type="pathway name" value="Synthesis of GDP-mannose"/>
</dbReference>
<dbReference type="SABIO-RK" id="Q92871"/>
<dbReference type="SignaLink" id="Q92871"/>
<dbReference type="UniPathway" id="UPA00126">
    <property type="reaction ID" value="UER00424"/>
</dbReference>
<dbReference type="BioGRID-ORCS" id="5372">
    <property type="hits" value="10 hits in 1170 CRISPR screens"/>
</dbReference>
<dbReference type="ChiTaRS" id="PMM1">
    <property type="organism name" value="human"/>
</dbReference>
<dbReference type="EvolutionaryTrace" id="Q92871"/>
<dbReference type="GeneWiki" id="PMM1"/>
<dbReference type="GenomeRNAi" id="5372"/>
<dbReference type="Pharos" id="Q92871">
    <property type="development level" value="Tbio"/>
</dbReference>
<dbReference type="PRO" id="PR:Q92871"/>
<dbReference type="Proteomes" id="UP000005640">
    <property type="component" value="Chromosome 22"/>
</dbReference>
<dbReference type="RNAct" id="Q92871">
    <property type="molecule type" value="protein"/>
</dbReference>
<dbReference type="Bgee" id="ENSG00000100417">
    <property type="expression patterns" value="Expressed in lower esophagus mucosa and 187 other cell types or tissues"/>
</dbReference>
<dbReference type="ExpressionAtlas" id="Q92871">
    <property type="expression patterns" value="baseline and differential"/>
</dbReference>
<dbReference type="GO" id="GO:0005829">
    <property type="term" value="C:cytosol"/>
    <property type="evidence" value="ECO:0000314"/>
    <property type="project" value="HPA"/>
</dbReference>
<dbReference type="GO" id="GO:0043025">
    <property type="term" value="C:neuronal cell body"/>
    <property type="evidence" value="ECO:0007669"/>
    <property type="project" value="Ensembl"/>
</dbReference>
<dbReference type="GO" id="GO:0046872">
    <property type="term" value="F:metal ion binding"/>
    <property type="evidence" value="ECO:0007669"/>
    <property type="project" value="UniProtKB-KW"/>
</dbReference>
<dbReference type="GO" id="GO:0004615">
    <property type="term" value="F:phosphomannomutase activity"/>
    <property type="evidence" value="ECO:0000314"/>
    <property type="project" value="UniProtKB"/>
</dbReference>
<dbReference type="GO" id="GO:1990830">
    <property type="term" value="P:cellular response to leukemia inhibitory factor"/>
    <property type="evidence" value="ECO:0007669"/>
    <property type="project" value="Ensembl"/>
</dbReference>
<dbReference type="GO" id="GO:0009298">
    <property type="term" value="P:GDP-mannose biosynthetic process"/>
    <property type="evidence" value="ECO:0000304"/>
    <property type="project" value="Reactome"/>
</dbReference>
<dbReference type="GO" id="GO:0006013">
    <property type="term" value="P:mannose metabolic process"/>
    <property type="evidence" value="ECO:0000314"/>
    <property type="project" value="UniProtKB"/>
</dbReference>
<dbReference type="GO" id="GO:0006487">
    <property type="term" value="P:protein N-linked glycosylation"/>
    <property type="evidence" value="ECO:0000318"/>
    <property type="project" value="GO_Central"/>
</dbReference>
<dbReference type="CDD" id="cd02585">
    <property type="entry name" value="HAD_PMM"/>
    <property type="match status" value="1"/>
</dbReference>
<dbReference type="FunFam" id="3.40.50.1000:FF:000449">
    <property type="match status" value="1"/>
</dbReference>
<dbReference type="FunFam" id="3.30.1240.20:FF:000001">
    <property type="entry name" value="Phosphomannomutase"/>
    <property type="match status" value="1"/>
</dbReference>
<dbReference type="Gene3D" id="3.30.1240.20">
    <property type="match status" value="1"/>
</dbReference>
<dbReference type="Gene3D" id="3.40.50.1000">
    <property type="entry name" value="HAD superfamily/HAD-like"/>
    <property type="match status" value="1"/>
</dbReference>
<dbReference type="InterPro" id="IPR036412">
    <property type="entry name" value="HAD-like_sf"/>
</dbReference>
<dbReference type="InterPro" id="IPR006379">
    <property type="entry name" value="HAD-SF_hydro_IIB"/>
</dbReference>
<dbReference type="InterPro" id="IPR023214">
    <property type="entry name" value="HAD_sf"/>
</dbReference>
<dbReference type="InterPro" id="IPR005002">
    <property type="entry name" value="PMM"/>
</dbReference>
<dbReference type="InterPro" id="IPR043169">
    <property type="entry name" value="PMM_cap"/>
</dbReference>
<dbReference type="NCBIfam" id="TIGR01484">
    <property type="entry name" value="HAD-SF-IIB"/>
    <property type="match status" value="1"/>
</dbReference>
<dbReference type="PANTHER" id="PTHR10466">
    <property type="entry name" value="PHOSPHOMANNOMUTASE"/>
    <property type="match status" value="1"/>
</dbReference>
<dbReference type="PANTHER" id="PTHR10466:SF1">
    <property type="entry name" value="PHOSPHOMANNOMUTASE 1"/>
    <property type="match status" value="1"/>
</dbReference>
<dbReference type="Pfam" id="PF03332">
    <property type="entry name" value="PMM"/>
    <property type="match status" value="1"/>
</dbReference>
<dbReference type="SFLD" id="SFLDF00445">
    <property type="entry name" value="alpha-phosphomannomutase"/>
    <property type="match status" value="1"/>
</dbReference>
<dbReference type="SFLD" id="SFLDS00003">
    <property type="entry name" value="Haloacid_Dehalogenase"/>
    <property type="match status" value="1"/>
</dbReference>
<dbReference type="SUPFAM" id="SSF56784">
    <property type="entry name" value="HAD-like"/>
    <property type="match status" value="1"/>
</dbReference>
<protein>
    <recommendedName>
        <fullName evidence="4">Phosphomannomutase 1</fullName>
        <shortName evidence="4">PMM 1</shortName>
        <ecNumber evidence="3">5.4.2.8</ecNumber>
    </recommendedName>
    <alternativeName>
        <fullName>PMMH-22</fullName>
    </alternativeName>
</protein>
<name>PMM1_HUMAN</name>
<evidence type="ECO:0000250" key="1">
    <source>
        <dbReference type="UniProtKB" id="O35621"/>
    </source>
</evidence>
<evidence type="ECO:0000269" key="2">
    <source>
    </source>
</evidence>
<evidence type="ECO:0000303" key="3">
    <source>
    </source>
</evidence>
<evidence type="ECO:0000303" key="4">
    <source>
    </source>
</evidence>
<evidence type="ECO:0000305" key="5"/>
<evidence type="ECO:0007744" key="6">
    <source>
        <dbReference type="PDB" id="2FUC"/>
    </source>
</evidence>
<evidence type="ECO:0007744" key="7">
    <source>
        <dbReference type="PDB" id="2FUE"/>
    </source>
</evidence>
<evidence type="ECO:0007744" key="8">
    <source>
    </source>
</evidence>
<evidence type="ECO:0007829" key="9">
    <source>
        <dbReference type="PDB" id="2FUC"/>
    </source>
</evidence>
<evidence type="ECO:0007829" key="10">
    <source>
        <dbReference type="PDB" id="2FUE"/>
    </source>
</evidence>
<accession>Q92871</accession>
<accession>A8K003</accession>
<accession>Q92586</accession>
<keyword id="KW-0002">3D-structure</keyword>
<keyword id="KW-0007">Acetylation</keyword>
<keyword id="KW-0963">Cytoplasm</keyword>
<keyword id="KW-0413">Isomerase</keyword>
<keyword id="KW-0460">Magnesium</keyword>
<keyword id="KW-0479">Metal-binding</keyword>
<keyword id="KW-0597">Phosphoprotein</keyword>
<keyword id="KW-1267">Proteomics identification</keyword>
<keyword id="KW-1185">Reference proteome</keyword>
<organism>
    <name type="scientific">Homo sapiens</name>
    <name type="common">Human</name>
    <dbReference type="NCBI Taxonomy" id="9606"/>
    <lineage>
        <taxon>Eukaryota</taxon>
        <taxon>Metazoa</taxon>
        <taxon>Chordata</taxon>
        <taxon>Craniata</taxon>
        <taxon>Vertebrata</taxon>
        <taxon>Euteleostomi</taxon>
        <taxon>Mammalia</taxon>
        <taxon>Eutheria</taxon>
        <taxon>Euarchontoglires</taxon>
        <taxon>Primates</taxon>
        <taxon>Haplorrhini</taxon>
        <taxon>Catarrhini</taxon>
        <taxon>Hominidae</taxon>
        <taxon>Homo</taxon>
    </lineage>
</organism>
<feature type="initiator methionine" description="Removed" evidence="8">
    <location>
        <position position="1"/>
    </location>
</feature>
<feature type="chain" id="PRO_0000199692" description="Phosphomannomutase 1">
    <location>
        <begin position="2"/>
        <end position="262"/>
    </location>
</feature>
<feature type="active site" description="Nucleophile" evidence="2">
    <location>
        <position position="19"/>
    </location>
</feature>
<feature type="active site" description="Proton donor/acceptor" evidence="2">
    <location>
        <position position="21"/>
    </location>
</feature>
<feature type="binding site" evidence="2 6 7">
    <location>
        <position position="19"/>
    </location>
    <ligand>
        <name>Mg(2+)</name>
        <dbReference type="ChEBI" id="CHEBI:18420"/>
        <label>1</label>
    </ligand>
</feature>
<feature type="binding site" evidence="2 6 7">
    <location>
        <position position="21"/>
    </location>
    <ligand>
        <name>Mg(2+)</name>
        <dbReference type="ChEBI" id="CHEBI:18420"/>
        <label>1</label>
    </ligand>
</feature>
<feature type="binding site" evidence="2">
    <location>
        <position position="28"/>
    </location>
    <ligand>
        <name>alpha-D-mannose 1-phosphate</name>
        <dbReference type="ChEBI" id="CHEBI:58409"/>
    </ligand>
</feature>
<feature type="binding site" evidence="2">
    <location>
        <position position="132"/>
    </location>
    <ligand>
        <name>alpha-D-mannose 1-phosphate</name>
        <dbReference type="ChEBI" id="CHEBI:58409"/>
    </ligand>
</feature>
<feature type="binding site" evidence="2">
    <location>
        <position position="143"/>
    </location>
    <ligand>
        <name>alpha-D-mannose 1-phosphate</name>
        <dbReference type="ChEBI" id="CHEBI:58409"/>
    </ligand>
</feature>
<feature type="binding site" evidence="2">
    <location>
        <position position="150"/>
    </location>
    <ligand>
        <name>alpha-D-mannose 1-phosphate</name>
        <dbReference type="ChEBI" id="CHEBI:58409"/>
    </ligand>
</feature>
<feature type="binding site" evidence="2">
    <location>
        <position position="186"/>
    </location>
    <ligand>
        <name>alpha-D-mannose 1-phosphate</name>
        <dbReference type="ChEBI" id="CHEBI:58409"/>
    </ligand>
</feature>
<feature type="binding site" evidence="2">
    <location>
        <position position="188"/>
    </location>
    <ligand>
        <name>alpha-D-mannose 1-phosphate</name>
        <dbReference type="ChEBI" id="CHEBI:58409"/>
    </ligand>
</feature>
<feature type="binding site" evidence="2">
    <location>
        <position position="190"/>
    </location>
    <ligand>
        <name>alpha-D-mannose 1-phosphate</name>
        <dbReference type="ChEBI" id="CHEBI:58409"/>
    </ligand>
</feature>
<feature type="binding site" evidence="2 6 7">
    <location>
        <position position="218"/>
    </location>
    <ligand>
        <name>Mg(2+)</name>
        <dbReference type="ChEBI" id="CHEBI:18420"/>
        <label>1</label>
    </ligand>
</feature>
<feature type="binding site" evidence="2 6 7">
    <location>
        <position position="230"/>
    </location>
    <ligand>
        <name>Mg(2+)</name>
        <dbReference type="ChEBI" id="CHEBI:18420"/>
        <label>2</label>
    </ligand>
</feature>
<feature type="binding site" evidence="2 6 7">
    <location>
        <position position="232"/>
    </location>
    <ligand>
        <name>Mg(2+)</name>
        <dbReference type="ChEBI" id="CHEBI:18420"/>
        <label>2</label>
    </ligand>
</feature>
<feature type="binding site" evidence="2 6 7">
    <location>
        <position position="235"/>
    </location>
    <ligand>
        <name>Mg(2+)</name>
        <dbReference type="ChEBI" id="CHEBI:18420"/>
        <label>2</label>
    </ligand>
</feature>
<feature type="modified residue" description="N-acetylalanine" evidence="8">
    <location>
        <position position="2"/>
    </location>
</feature>
<feature type="modified residue" description="Phosphoserine" evidence="1">
    <location>
        <position position="242"/>
    </location>
</feature>
<feature type="sequence conflict" description="In Ref. 1; AAC51117." evidence="5" ref="1">
    <original>K</original>
    <variation>R</variation>
    <location>
        <position position="11"/>
    </location>
</feature>
<feature type="sequence conflict" description="In Ref. 1; AAC51117." evidence="5" ref="1">
    <original>A</original>
    <variation>D</variation>
    <location>
        <position position="169"/>
    </location>
</feature>
<feature type="strand" evidence="10">
    <location>
        <begin position="14"/>
        <end position="21"/>
    </location>
</feature>
<feature type="turn" evidence="10">
    <location>
        <begin position="22"/>
        <end position="24"/>
    </location>
</feature>
<feature type="helix" evidence="10">
    <location>
        <begin position="33"/>
        <end position="42"/>
    </location>
</feature>
<feature type="turn" evidence="10">
    <location>
        <begin position="43"/>
        <end position="45"/>
    </location>
</feature>
<feature type="strand" evidence="10">
    <location>
        <begin position="46"/>
        <end position="51"/>
    </location>
</feature>
<feature type="helix" evidence="10">
    <location>
        <begin position="56"/>
        <end position="63"/>
    </location>
</feature>
<feature type="turn" evidence="10">
    <location>
        <begin position="66"/>
        <end position="68"/>
    </location>
</feature>
<feature type="helix" evidence="10">
    <location>
        <begin position="69"/>
        <end position="72"/>
    </location>
</feature>
<feature type="strand" evidence="10">
    <location>
        <begin position="74"/>
        <end position="78"/>
    </location>
</feature>
<feature type="helix" evidence="10">
    <location>
        <begin position="79"/>
        <end position="81"/>
    </location>
</feature>
<feature type="strand" evidence="10">
    <location>
        <begin position="83"/>
        <end position="86"/>
    </location>
</feature>
<feature type="strand" evidence="9">
    <location>
        <begin position="89"/>
        <end position="91"/>
    </location>
</feature>
<feature type="helix" evidence="10">
    <location>
        <begin position="96"/>
        <end position="100"/>
    </location>
</feature>
<feature type="helix" evidence="10">
    <location>
        <begin position="102"/>
        <end position="117"/>
    </location>
</feature>
<feature type="strand" evidence="10">
    <location>
        <begin position="128"/>
        <end position="131"/>
    </location>
</feature>
<feature type="strand" evidence="10">
    <location>
        <begin position="136"/>
        <end position="138"/>
    </location>
</feature>
<feature type="helix" evidence="10">
    <location>
        <begin position="147"/>
        <end position="160"/>
    </location>
</feature>
<feature type="helix" evidence="10">
    <location>
        <begin position="162"/>
        <end position="173"/>
    </location>
</feature>
<feature type="turn" evidence="10">
    <location>
        <begin position="174"/>
        <end position="176"/>
    </location>
</feature>
<feature type="strand" evidence="10">
    <location>
        <begin position="179"/>
        <end position="182"/>
    </location>
</feature>
<feature type="strand" evidence="10">
    <location>
        <begin position="185"/>
        <end position="187"/>
    </location>
</feature>
<feature type="strand" evidence="10">
    <location>
        <begin position="189"/>
        <end position="193"/>
    </location>
</feature>
<feature type="helix" evidence="10">
    <location>
        <begin position="198"/>
        <end position="201"/>
    </location>
</feature>
<feature type="helix" evidence="10">
    <location>
        <begin position="202"/>
        <end position="205"/>
    </location>
</feature>
<feature type="turn" evidence="9">
    <location>
        <begin position="206"/>
        <end position="209"/>
    </location>
</feature>
<feature type="strand" evidence="10">
    <location>
        <begin position="211"/>
        <end position="218"/>
    </location>
</feature>
<feature type="helix" evidence="10">
    <location>
        <begin position="227"/>
        <end position="231"/>
    </location>
</feature>
<feature type="strand" evidence="10">
    <location>
        <begin position="235"/>
        <end position="239"/>
    </location>
</feature>
<feature type="helix" evidence="10">
    <location>
        <begin position="243"/>
        <end position="254"/>
    </location>
</feature>
<proteinExistence type="evidence at protein level"/>
<comment type="function">
    <text evidence="2">Involved in the synthesis of the GDP-mannose and dolichol-phosphate-mannose required for a number of critical mannosyl transfer reactions. In addition, may be responsible for the degradation of glucose-1,6-bisphosphate in ischemic brain.</text>
</comment>
<comment type="catalytic activity">
    <reaction evidence="2">
        <text>alpha-D-mannose 1-phosphate = D-mannose 6-phosphate</text>
        <dbReference type="Rhea" id="RHEA:11140"/>
        <dbReference type="ChEBI" id="CHEBI:58409"/>
        <dbReference type="ChEBI" id="CHEBI:58735"/>
        <dbReference type="EC" id="5.4.2.8"/>
    </reaction>
</comment>
<comment type="cofactor">
    <cofactor evidence="2">
        <name>Mg(2+)</name>
        <dbReference type="ChEBI" id="CHEBI:18420"/>
    </cofactor>
</comment>
<comment type="activity regulation">
    <text evidence="1">IMP, a metabolite whose concentration is elevated in anoxia, inhibits phosphomannomutase and phosphoglucomutase activities and strongly enhances glucose-1,6-bisphosphatase activity.</text>
</comment>
<comment type="biophysicochemical properties">
    <kinetics>
        <KM evidence="2">54 uM for alpha-D-mannose 1-phosphate</KM>
        <KM evidence="2">7.5 uM for alpha-D-glucose 1-phosphate</KM>
    </kinetics>
</comment>
<comment type="pathway">
    <text>Nucleotide-sugar biosynthesis; GDP-alpha-D-mannose biosynthesis; alpha-D-mannose 1-phosphate from D-fructose 6-phosphate: step 2/2.</text>
</comment>
<comment type="subunit">
    <text evidence="2">Homodimer.</text>
</comment>
<comment type="interaction">
    <interactant intactId="EBI-746784">
        <id>Q92871</id>
    </interactant>
    <interactant intactId="EBI-1052826">
        <id>P20340</id>
        <label>RAB6A</label>
    </interactant>
    <organismsDiffer>false</organismsDiffer>
    <experiments>4</experiments>
</comment>
<comment type="interaction">
    <interactant intactId="EBI-746784">
        <id>Q92871</id>
    </interactant>
    <interactant intactId="EBI-8840191">
        <id>P20340-2</id>
        <label>RAB6A</label>
    </interactant>
    <organismsDiffer>false</organismsDiffer>
    <experiments>3</experiments>
</comment>
<comment type="interaction">
    <interactant intactId="EBI-746784">
        <id>Q92871</id>
    </interactant>
    <interactant intactId="EBI-1760079">
        <id>Q9NRW1</id>
        <label>RAB6B</label>
    </interactant>
    <organismsDiffer>false</organismsDiffer>
    <experiments>5</experiments>
</comment>
<comment type="subcellular location">
    <subcellularLocation>
        <location evidence="1">Cytoplasm</location>
    </subcellularLocation>
</comment>
<comment type="tissue specificity">
    <text>Strong expression in liver, heart, brain, and pancreas; lower expression in skeletal muscle.</text>
</comment>
<comment type="similarity">
    <text evidence="5">Belongs to the eukaryotic PMM family.</text>
</comment>
<reference key="1">
    <citation type="journal article" date="1997" name="Genomics">
        <title>PMM (PMM1), the human homologue of SEC53 or yeast phosphomannomutase, is localized on chromosome 22q13.</title>
        <authorList>
            <person name="Matthijs G."/>
            <person name="Schollen E."/>
            <person name="Pirard M."/>
            <person name="Budarf M.L."/>
            <person name="van Schaftingen E."/>
            <person name="Cassiman J.-J."/>
        </authorList>
    </citation>
    <scope>NUCLEOTIDE SEQUENCE [MRNA]</scope>
    <source>
        <tissue>Liver</tissue>
    </source>
</reference>
<reference key="2">
    <citation type="journal article" date="1997" name="Genomics">
        <title>Isolation of the human phosphomannomutase gene (PMM1) and assignment to chromosome 22q13.</title>
        <authorList>
            <person name="Wada Y."/>
            <person name="Sakamoto M."/>
        </authorList>
    </citation>
    <scope>NUCLEOTIDE SEQUENCE [MRNA]</scope>
</reference>
<reference key="3">
    <citation type="submission" date="1997-02" db="EMBL/GenBank/DDBJ databases">
        <authorList>
            <person name="Hansen S.H."/>
            <person name="Frank S.R."/>
            <person name="Casanova J.E."/>
        </authorList>
    </citation>
    <scope>NUCLEOTIDE SEQUENCE [MRNA]</scope>
    <source>
        <tissue>Brain</tissue>
    </source>
</reference>
<reference key="4">
    <citation type="journal article" date="2004" name="Genome Biol.">
        <title>A genome annotation-driven approach to cloning the human ORFeome.</title>
        <authorList>
            <person name="Collins J.E."/>
            <person name="Wright C.L."/>
            <person name="Edwards C.A."/>
            <person name="Davis M.P."/>
            <person name="Grinham J.A."/>
            <person name="Cole C.G."/>
            <person name="Goward M.E."/>
            <person name="Aguado B."/>
            <person name="Mallya M."/>
            <person name="Mokrab Y."/>
            <person name="Huckle E.J."/>
            <person name="Beare D.M."/>
            <person name="Dunham I."/>
        </authorList>
    </citation>
    <scope>NUCLEOTIDE SEQUENCE [LARGE SCALE MRNA]</scope>
</reference>
<reference key="5">
    <citation type="journal article" date="2004" name="Nat. Genet.">
        <title>Complete sequencing and characterization of 21,243 full-length human cDNAs.</title>
        <authorList>
            <person name="Ota T."/>
            <person name="Suzuki Y."/>
            <person name="Nishikawa T."/>
            <person name="Otsuki T."/>
            <person name="Sugiyama T."/>
            <person name="Irie R."/>
            <person name="Wakamatsu A."/>
            <person name="Hayashi K."/>
            <person name="Sato H."/>
            <person name="Nagai K."/>
            <person name="Kimura K."/>
            <person name="Makita H."/>
            <person name="Sekine M."/>
            <person name="Obayashi M."/>
            <person name="Nishi T."/>
            <person name="Shibahara T."/>
            <person name="Tanaka T."/>
            <person name="Ishii S."/>
            <person name="Yamamoto J."/>
            <person name="Saito K."/>
            <person name="Kawai Y."/>
            <person name="Isono Y."/>
            <person name="Nakamura Y."/>
            <person name="Nagahari K."/>
            <person name="Murakami K."/>
            <person name="Yasuda T."/>
            <person name="Iwayanagi T."/>
            <person name="Wagatsuma M."/>
            <person name="Shiratori A."/>
            <person name="Sudo H."/>
            <person name="Hosoiri T."/>
            <person name="Kaku Y."/>
            <person name="Kodaira H."/>
            <person name="Kondo H."/>
            <person name="Sugawara M."/>
            <person name="Takahashi M."/>
            <person name="Kanda K."/>
            <person name="Yokoi T."/>
            <person name="Furuya T."/>
            <person name="Kikkawa E."/>
            <person name="Omura Y."/>
            <person name="Abe K."/>
            <person name="Kamihara K."/>
            <person name="Katsuta N."/>
            <person name="Sato K."/>
            <person name="Tanikawa M."/>
            <person name="Yamazaki M."/>
            <person name="Ninomiya K."/>
            <person name="Ishibashi T."/>
            <person name="Yamashita H."/>
            <person name="Murakawa K."/>
            <person name="Fujimori K."/>
            <person name="Tanai H."/>
            <person name="Kimata M."/>
            <person name="Watanabe M."/>
            <person name="Hiraoka S."/>
            <person name="Chiba Y."/>
            <person name="Ishida S."/>
            <person name="Ono Y."/>
            <person name="Takiguchi S."/>
            <person name="Watanabe S."/>
            <person name="Yosida M."/>
            <person name="Hotuta T."/>
            <person name="Kusano J."/>
            <person name="Kanehori K."/>
            <person name="Takahashi-Fujii A."/>
            <person name="Hara H."/>
            <person name="Tanase T.-O."/>
            <person name="Nomura Y."/>
            <person name="Togiya S."/>
            <person name="Komai F."/>
            <person name="Hara R."/>
            <person name="Takeuchi K."/>
            <person name="Arita M."/>
            <person name="Imose N."/>
            <person name="Musashino K."/>
            <person name="Yuuki H."/>
            <person name="Oshima A."/>
            <person name="Sasaki N."/>
            <person name="Aotsuka S."/>
            <person name="Yoshikawa Y."/>
            <person name="Matsunawa H."/>
            <person name="Ichihara T."/>
            <person name="Shiohata N."/>
            <person name="Sano S."/>
            <person name="Moriya S."/>
            <person name="Momiyama H."/>
            <person name="Satoh N."/>
            <person name="Takami S."/>
            <person name="Terashima Y."/>
            <person name="Suzuki O."/>
            <person name="Nakagawa S."/>
            <person name="Senoh A."/>
            <person name="Mizoguchi H."/>
            <person name="Goto Y."/>
            <person name="Shimizu F."/>
            <person name="Wakebe H."/>
            <person name="Hishigaki H."/>
            <person name="Watanabe T."/>
            <person name="Sugiyama A."/>
            <person name="Takemoto M."/>
            <person name="Kawakami B."/>
            <person name="Yamazaki M."/>
            <person name="Watanabe K."/>
            <person name="Kumagai A."/>
            <person name="Itakura S."/>
            <person name="Fukuzumi Y."/>
            <person name="Fujimori Y."/>
            <person name="Komiyama M."/>
            <person name="Tashiro H."/>
            <person name="Tanigami A."/>
            <person name="Fujiwara T."/>
            <person name="Ono T."/>
            <person name="Yamada K."/>
            <person name="Fujii Y."/>
            <person name="Ozaki K."/>
            <person name="Hirao M."/>
            <person name="Ohmori Y."/>
            <person name="Kawabata A."/>
            <person name="Hikiji T."/>
            <person name="Kobatake N."/>
            <person name="Inagaki H."/>
            <person name="Ikema Y."/>
            <person name="Okamoto S."/>
            <person name="Okitani R."/>
            <person name="Kawakami T."/>
            <person name="Noguchi S."/>
            <person name="Itoh T."/>
            <person name="Shigeta K."/>
            <person name="Senba T."/>
            <person name="Matsumura K."/>
            <person name="Nakajima Y."/>
            <person name="Mizuno T."/>
            <person name="Morinaga M."/>
            <person name="Sasaki M."/>
            <person name="Togashi T."/>
            <person name="Oyama M."/>
            <person name="Hata H."/>
            <person name="Watanabe M."/>
            <person name="Komatsu T."/>
            <person name="Mizushima-Sugano J."/>
            <person name="Satoh T."/>
            <person name="Shirai Y."/>
            <person name="Takahashi Y."/>
            <person name="Nakagawa K."/>
            <person name="Okumura K."/>
            <person name="Nagase T."/>
            <person name="Nomura N."/>
            <person name="Kikuchi H."/>
            <person name="Masuho Y."/>
            <person name="Yamashita R."/>
            <person name="Nakai K."/>
            <person name="Yada T."/>
            <person name="Nakamura Y."/>
            <person name="Ohara O."/>
            <person name="Isogai T."/>
            <person name="Sugano S."/>
        </authorList>
    </citation>
    <scope>NUCLEOTIDE SEQUENCE [LARGE SCALE MRNA]</scope>
    <source>
        <tissue>Skeletal muscle</tissue>
    </source>
</reference>
<reference key="6">
    <citation type="journal article" date="1999" name="Nature">
        <title>The DNA sequence of human chromosome 22.</title>
        <authorList>
            <person name="Dunham I."/>
            <person name="Hunt A.R."/>
            <person name="Collins J.E."/>
            <person name="Bruskiewich R."/>
            <person name="Beare D.M."/>
            <person name="Clamp M."/>
            <person name="Smink L.J."/>
            <person name="Ainscough R."/>
            <person name="Almeida J.P."/>
            <person name="Babbage A.K."/>
            <person name="Bagguley C."/>
            <person name="Bailey J."/>
            <person name="Barlow K.F."/>
            <person name="Bates K.N."/>
            <person name="Beasley O.P."/>
            <person name="Bird C.P."/>
            <person name="Blakey S.E."/>
            <person name="Bridgeman A.M."/>
            <person name="Buck D."/>
            <person name="Burgess J."/>
            <person name="Burrill W.D."/>
            <person name="Burton J."/>
            <person name="Carder C."/>
            <person name="Carter N.P."/>
            <person name="Chen Y."/>
            <person name="Clark G."/>
            <person name="Clegg S.M."/>
            <person name="Cobley V.E."/>
            <person name="Cole C.G."/>
            <person name="Collier R.E."/>
            <person name="Connor R."/>
            <person name="Conroy D."/>
            <person name="Corby N.R."/>
            <person name="Coville G.J."/>
            <person name="Cox A.V."/>
            <person name="Davis J."/>
            <person name="Dawson E."/>
            <person name="Dhami P.D."/>
            <person name="Dockree C."/>
            <person name="Dodsworth S.J."/>
            <person name="Durbin R.M."/>
            <person name="Ellington A.G."/>
            <person name="Evans K.L."/>
            <person name="Fey J.M."/>
            <person name="Fleming K."/>
            <person name="French L."/>
            <person name="Garner A.A."/>
            <person name="Gilbert J.G.R."/>
            <person name="Goward M.E."/>
            <person name="Grafham D.V."/>
            <person name="Griffiths M.N.D."/>
            <person name="Hall C."/>
            <person name="Hall R.E."/>
            <person name="Hall-Tamlyn G."/>
            <person name="Heathcott R.W."/>
            <person name="Ho S."/>
            <person name="Holmes S."/>
            <person name="Hunt S.E."/>
            <person name="Jones M.C."/>
            <person name="Kershaw J."/>
            <person name="Kimberley A.M."/>
            <person name="King A."/>
            <person name="Laird G.K."/>
            <person name="Langford C.F."/>
            <person name="Leversha M.A."/>
            <person name="Lloyd C."/>
            <person name="Lloyd D.M."/>
            <person name="Martyn I.D."/>
            <person name="Mashreghi-Mohammadi M."/>
            <person name="Matthews L.H."/>
            <person name="Mccann O.T."/>
            <person name="Mcclay J."/>
            <person name="Mclaren S."/>
            <person name="McMurray A.A."/>
            <person name="Milne S.A."/>
            <person name="Mortimore B.J."/>
            <person name="Odell C.N."/>
            <person name="Pavitt R."/>
            <person name="Pearce A.V."/>
            <person name="Pearson D."/>
            <person name="Phillimore B.J.C.T."/>
            <person name="Phillips S.H."/>
            <person name="Plumb R.W."/>
            <person name="Ramsay H."/>
            <person name="Ramsey Y."/>
            <person name="Rogers L."/>
            <person name="Ross M.T."/>
            <person name="Scott C.E."/>
            <person name="Sehra H.K."/>
            <person name="Skuce C.D."/>
            <person name="Smalley S."/>
            <person name="Smith M.L."/>
            <person name="Soderlund C."/>
            <person name="Spragon L."/>
            <person name="Steward C.A."/>
            <person name="Sulston J.E."/>
            <person name="Swann R.M."/>
            <person name="Vaudin M."/>
            <person name="Wall M."/>
            <person name="Wallis J.M."/>
            <person name="Whiteley M.N."/>
            <person name="Willey D.L."/>
            <person name="Williams L."/>
            <person name="Williams S.A."/>
            <person name="Williamson H."/>
            <person name="Wilmer T.E."/>
            <person name="Wilming L."/>
            <person name="Wright C.L."/>
            <person name="Hubbard T."/>
            <person name="Bentley D.R."/>
            <person name="Beck S."/>
            <person name="Rogers J."/>
            <person name="Shimizu N."/>
            <person name="Minoshima S."/>
            <person name="Kawasaki K."/>
            <person name="Sasaki T."/>
            <person name="Asakawa S."/>
            <person name="Kudoh J."/>
            <person name="Shintani A."/>
            <person name="Shibuya K."/>
            <person name="Yoshizaki Y."/>
            <person name="Aoki N."/>
            <person name="Mitsuyama S."/>
            <person name="Roe B.A."/>
            <person name="Chen F."/>
            <person name="Chu L."/>
            <person name="Crabtree J."/>
            <person name="Deschamps S."/>
            <person name="Do A."/>
            <person name="Do T."/>
            <person name="Dorman A."/>
            <person name="Fang F."/>
            <person name="Fu Y."/>
            <person name="Hu P."/>
            <person name="Hua A."/>
            <person name="Kenton S."/>
            <person name="Lai H."/>
            <person name="Lao H.I."/>
            <person name="Lewis J."/>
            <person name="Lewis S."/>
            <person name="Lin S.-P."/>
            <person name="Loh P."/>
            <person name="Malaj E."/>
            <person name="Nguyen T."/>
            <person name="Pan H."/>
            <person name="Phan S."/>
            <person name="Qi S."/>
            <person name="Qian Y."/>
            <person name="Ray L."/>
            <person name="Ren Q."/>
            <person name="Shaull S."/>
            <person name="Sloan D."/>
            <person name="Song L."/>
            <person name="Wang Q."/>
            <person name="Wang Y."/>
            <person name="Wang Z."/>
            <person name="White J."/>
            <person name="Willingham D."/>
            <person name="Wu H."/>
            <person name="Yao Z."/>
            <person name="Zhan M."/>
            <person name="Zhang G."/>
            <person name="Chissoe S."/>
            <person name="Murray J."/>
            <person name="Miller N."/>
            <person name="Minx P."/>
            <person name="Fulton R."/>
            <person name="Johnson D."/>
            <person name="Bemis G."/>
            <person name="Bentley D."/>
            <person name="Bradshaw H."/>
            <person name="Bourne S."/>
            <person name="Cordes M."/>
            <person name="Du Z."/>
            <person name="Fulton L."/>
            <person name="Goela D."/>
            <person name="Graves T."/>
            <person name="Hawkins J."/>
            <person name="Hinds K."/>
            <person name="Kemp K."/>
            <person name="Latreille P."/>
            <person name="Layman D."/>
            <person name="Ozersky P."/>
            <person name="Rohlfing T."/>
            <person name="Scheet P."/>
            <person name="Walker C."/>
            <person name="Wamsley A."/>
            <person name="Wohldmann P."/>
            <person name="Pepin K."/>
            <person name="Nelson J."/>
            <person name="Korf I."/>
            <person name="Bedell J.A."/>
            <person name="Hillier L.W."/>
            <person name="Mardis E."/>
            <person name="Waterston R."/>
            <person name="Wilson R."/>
            <person name="Emanuel B.S."/>
            <person name="Shaikh T."/>
            <person name="Kurahashi H."/>
            <person name="Saitta S."/>
            <person name="Budarf M.L."/>
            <person name="McDermid H.E."/>
            <person name="Johnson A."/>
            <person name="Wong A.C.C."/>
            <person name="Morrow B.E."/>
            <person name="Edelmann L."/>
            <person name="Kim U.J."/>
            <person name="Shizuya H."/>
            <person name="Simon M.I."/>
            <person name="Dumanski J.P."/>
            <person name="Peyrard M."/>
            <person name="Kedra D."/>
            <person name="Seroussi E."/>
            <person name="Fransson I."/>
            <person name="Tapia I."/>
            <person name="Bruder C.E."/>
            <person name="O'Brien K.P."/>
            <person name="Wilkinson P."/>
            <person name="Bodenteich A."/>
            <person name="Hartman K."/>
            <person name="Hu X."/>
            <person name="Khan A.S."/>
            <person name="Lane L."/>
            <person name="Tilahun Y."/>
            <person name="Wright H."/>
        </authorList>
    </citation>
    <scope>NUCLEOTIDE SEQUENCE [LARGE SCALE GENOMIC DNA]</scope>
</reference>
<reference key="7">
    <citation type="submission" date="2005-07" db="EMBL/GenBank/DDBJ databases">
        <authorList>
            <person name="Mural R.J."/>
            <person name="Istrail S."/>
            <person name="Sutton G."/>
            <person name="Florea L."/>
            <person name="Halpern A.L."/>
            <person name="Mobarry C.M."/>
            <person name="Lippert R."/>
            <person name="Walenz B."/>
            <person name="Shatkay H."/>
            <person name="Dew I."/>
            <person name="Miller J.R."/>
            <person name="Flanigan M.J."/>
            <person name="Edwards N.J."/>
            <person name="Bolanos R."/>
            <person name="Fasulo D."/>
            <person name="Halldorsson B.V."/>
            <person name="Hannenhalli S."/>
            <person name="Turner R."/>
            <person name="Yooseph S."/>
            <person name="Lu F."/>
            <person name="Nusskern D.R."/>
            <person name="Shue B.C."/>
            <person name="Zheng X.H."/>
            <person name="Zhong F."/>
            <person name="Delcher A.L."/>
            <person name="Huson D.H."/>
            <person name="Kravitz S.A."/>
            <person name="Mouchard L."/>
            <person name="Reinert K."/>
            <person name="Remington K.A."/>
            <person name="Clark A.G."/>
            <person name="Waterman M.S."/>
            <person name="Eichler E.E."/>
            <person name="Adams M.D."/>
            <person name="Hunkapiller M.W."/>
            <person name="Myers E.W."/>
            <person name="Venter J.C."/>
        </authorList>
    </citation>
    <scope>NUCLEOTIDE SEQUENCE [LARGE SCALE GENOMIC DNA]</scope>
</reference>
<reference key="8">
    <citation type="journal article" date="2004" name="Genome Res.">
        <title>The status, quality, and expansion of the NIH full-length cDNA project: the Mammalian Gene Collection (MGC).</title>
        <authorList>
            <consortium name="The MGC Project Team"/>
        </authorList>
    </citation>
    <scope>NUCLEOTIDE SEQUENCE [LARGE SCALE MRNA]</scope>
    <source>
        <tissue>Brain</tissue>
        <tissue>Pancreas</tissue>
    </source>
</reference>
<reference key="9">
    <citation type="journal article" date="2012" name="Proc. Natl. Acad. Sci. U.S.A.">
        <title>N-terminal acetylome analyses and functional insights of the N-terminal acetyltransferase NatB.</title>
        <authorList>
            <person name="Van Damme P."/>
            <person name="Lasa M."/>
            <person name="Polevoda B."/>
            <person name="Gazquez C."/>
            <person name="Elosegui-Artola A."/>
            <person name="Kim D.S."/>
            <person name="De Juan-Pardo E."/>
            <person name="Demeyer K."/>
            <person name="Hole K."/>
            <person name="Larrea E."/>
            <person name="Timmerman E."/>
            <person name="Prieto J."/>
            <person name="Arnesen T."/>
            <person name="Sherman F."/>
            <person name="Gevaert K."/>
            <person name="Aldabe R."/>
        </authorList>
    </citation>
    <scope>ACETYLATION [LARGE SCALE ANALYSIS] AT ALA-2</scope>
    <scope>CLEAVAGE OF INITIATOR METHIONINE [LARGE SCALE ANALYSIS]</scope>
    <scope>IDENTIFICATION BY MASS SPECTROMETRY [LARGE SCALE ANALYSIS]</scope>
</reference>
<reference key="10">
    <citation type="journal article" date="2006" name="J. Biol. Chem.">
        <title>The X-ray crystal structures of human alpha-phosphomannomutase 1 reveal the structural basis of congenital disorder of glycosylation type 1a.</title>
        <authorList>
            <person name="Silvaggi N.R."/>
            <person name="Zhang C."/>
            <person name="Lu Z."/>
            <person name="Dai J."/>
            <person name="Dunaway-Mariano D."/>
            <person name="Allen K.N."/>
        </authorList>
    </citation>
    <scope>X-RAY CRYSTALLOGRAPHY (1.75 ANGSTROMS) IN COMPLEX WITH MAGNESIUM IONS AND MANNOSE 1-PHOSPHATE</scope>
    <scope>FUNCTION</scope>
    <scope>CATALYTIC ACTIVITY</scope>
    <scope>ACTIVE SITE</scope>
    <scope>COFACTOR</scope>
    <scope>SUBUNIT</scope>
    <scope>BIOPHYSICOCHEMICAL PROPERTIES</scope>
</reference>
<reference key="11">
    <citation type="journal article" date="2018" name="Biochemistry">
        <title>Structural basis of the molecular switch between phosphatase and mutase functions of human phosphomannomutase 1 under ischemic conditions.</title>
        <authorList>
            <person name="Ji T."/>
            <person name="Zhang C."/>
            <person name="Zheng L."/>
            <person name="Dunaway-Mariano D."/>
            <person name="Allen K.N."/>
        </authorList>
    </citation>
    <scope>X-RAY CRYSTALLOGRAPHY (1.92 ANGSTROMS) IN COMPLEX WITH MAGNESIUM IONS AND INOSINE MONOPHOSPHATE</scope>
</reference>
<sequence length="262" mass="29747">MAVTAQAARRKERVLCLFDVDGTLTPARQKIDPEVAAFLQKLRSRVQIGVVGGSDYCKIAEQLGDGDEVIEKFDYVFAENGTVQYKHGRLLSKQTIQNHLGEELLQDLINFCLSYMALLRLPKKRGTFIEFRNGMLNISPIGRSCTLEERIEFSELDKKEKIREKFVEALKTEFAGKGLRFSRGGMISFDVFPEGWDKRYCLDSLDQDSFDTIHFFGNETSPGGNDFEIFADPRTVGHSVVSPQDTVQRCREIFFPETAHEA</sequence>